<gene>
    <name type="ordered locus">BB4106</name>
</gene>
<proteinExistence type="inferred from homology"/>
<comment type="catalytic activity">
    <reaction evidence="1">
        <text>(4aS,6R)-4a-hydroxy-L-erythro-5,6,7,8-tetrahydrobiopterin = (6R)-L-erythro-6,7-dihydrobiopterin + H2O</text>
        <dbReference type="Rhea" id="RHEA:11920"/>
        <dbReference type="ChEBI" id="CHEBI:15377"/>
        <dbReference type="ChEBI" id="CHEBI:15642"/>
        <dbReference type="ChEBI" id="CHEBI:43120"/>
        <dbReference type="EC" id="4.2.1.96"/>
    </reaction>
</comment>
<comment type="similarity">
    <text evidence="1">Belongs to the pterin-4-alpha-carbinolamine dehydratase family.</text>
</comment>
<comment type="sequence caution" evidence="2">
    <conflict type="erroneous initiation">
        <sequence resource="EMBL-CDS" id="CAE34469"/>
    </conflict>
</comment>
<reference key="1">
    <citation type="journal article" date="2003" name="Nat. Genet.">
        <title>Comparative analysis of the genome sequences of Bordetella pertussis, Bordetella parapertussis and Bordetella bronchiseptica.</title>
        <authorList>
            <person name="Parkhill J."/>
            <person name="Sebaihia M."/>
            <person name="Preston A."/>
            <person name="Murphy L.D."/>
            <person name="Thomson N.R."/>
            <person name="Harris D.E."/>
            <person name="Holden M.T.G."/>
            <person name="Churcher C.M."/>
            <person name="Bentley S.D."/>
            <person name="Mungall K.L."/>
            <person name="Cerdeno-Tarraga A.-M."/>
            <person name="Temple L."/>
            <person name="James K.D."/>
            <person name="Harris B."/>
            <person name="Quail M.A."/>
            <person name="Achtman M."/>
            <person name="Atkin R."/>
            <person name="Baker S."/>
            <person name="Basham D."/>
            <person name="Bason N."/>
            <person name="Cherevach I."/>
            <person name="Chillingworth T."/>
            <person name="Collins M."/>
            <person name="Cronin A."/>
            <person name="Davis P."/>
            <person name="Doggett J."/>
            <person name="Feltwell T."/>
            <person name="Goble A."/>
            <person name="Hamlin N."/>
            <person name="Hauser H."/>
            <person name="Holroyd S."/>
            <person name="Jagels K."/>
            <person name="Leather S."/>
            <person name="Moule S."/>
            <person name="Norberczak H."/>
            <person name="O'Neil S."/>
            <person name="Ormond D."/>
            <person name="Price C."/>
            <person name="Rabbinowitsch E."/>
            <person name="Rutter S."/>
            <person name="Sanders M."/>
            <person name="Saunders D."/>
            <person name="Seeger K."/>
            <person name="Sharp S."/>
            <person name="Simmonds M."/>
            <person name="Skelton J."/>
            <person name="Squares R."/>
            <person name="Squares S."/>
            <person name="Stevens K."/>
            <person name="Unwin L."/>
            <person name="Whitehead S."/>
            <person name="Barrell B.G."/>
            <person name="Maskell D.J."/>
        </authorList>
    </citation>
    <scope>NUCLEOTIDE SEQUENCE [LARGE SCALE GENOMIC DNA]</scope>
    <source>
        <strain>ATCC BAA-588 / NCTC 13252 / RB50</strain>
    </source>
</reference>
<organism>
    <name type="scientific">Bordetella bronchiseptica (strain ATCC BAA-588 / NCTC 13252 / RB50)</name>
    <name type="common">Alcaligenes bronchisepticus</name>
    <dbReference type="NCBI Taxonomy" id="257310"/>
    <lineage>
        <taxon>Bacteria</taxon>
        <taxon>Pseudomonadati</taxon>
        <taxon>Pseudomonadota</taxon>
        <taxon>Betaproteobacteria</taxon>
        <taxon>Burkholderiales</taxon>
        <taxon>Alcaligenaceae</taxon>
        <taxon>Bordetella</taxon>
    </lineage>
</organism>
<accession>Q7WG14</accession>
<dbReference type="EC" id="4.2.1.96" evidence="1"/>
<dbReference type="EMBL" id="BX640449">
    <property type="protein sequence ID" value="CAE34469.1"/>
    <property type="status" value="ALT_INIT"/>
    <property type="molecule type" value="Genomic_DNA"/>
</dbReference>
<dbReference type="SMR" id="Q7WG14"/>
<dbReference type="KEGG" id="bbr:BB4106"/>
<dbReference type="eggNOG" id="COG2154">
    <property type="taxonomic scope" value="Bacteria"/>
</dbReference>
<dbReference type="HOGENOM" id="CLU_081974_3_0_4"/>
<dbReference type="Proteomes" id="UP000001027">
    <property type="component" value="Chromosome"/>
</dbReference>
<dbReference type="GO" id="GO:0008124">
    <property type="term" value="F:4-alpha-hydroxytetrahydrobiopterin dehydratase activity"/>
    <property type="evidence" value="ECO:0007669"/>
    <property type="project" value="UniProtKB-UniRule"/>
</dbReference>
<dbReference type="GO" id="GO:0006729">
    <property type="term" value="P:tetrahydrobiopterin biosynthetic process"/>
    <property type="evidence" value="ECO:0007669"/>
    <property type="project" value="InterPro"/>
</dbReference>
<dbReference type="CDD" id="cd00914">
    <property type="entry name" value="PCD_DCoH_subfamily_b"/>
    <property type="match status" value="1"/>
</dbReference>
<dbReference type="Gene3D" id="3.30.1360.20">
    <property type="entry name" value="Transcriptional coactivator/pterin dehydratase"/>
    <property type="match status" value="1"/>
</dbReference>
<dbReference type="HAMAP" id="MF_00434">
    <property type="entry name" value="Pterin_4_alpha"/>
    <property type="match status" value="1"/>
</dbReference>
<dbReference type="InterPro" id="IPR036428">
    <property type="entry name" value="PCD_sf"/>
</dbReference>
<dbReference type="InterPro" id="IPR001533">
    <property type="entry name" value="Pterin_deHydtase"/>
</dbReference>
<dbReference type="NCBIfam" id="NF002017">
    <property type="entry name" value="PRK00823.1-2"/>
    <property type="match status" value="1"/>
</dbReference>
<dbReference type="NCBIfam" id="NF002018">
    <property type="entry name" value="PRK00823.1-3"/>
    <property type="match status" value="1"/>
</dbReference>
<dbReference type="NCBIfam" id="NF002020">
    <property type="entry name" value="PRK00823.1-5"/>
    <property type="match status" value="1"/>
</dbReference>
<dbReference type="PANTHER" id="PTHR12599">
    <property type="entry name" value="PTERIN-4-ALPHA-CARBINOLAMINE DEHYDRATASE"/>
    <property type="match status" value="1"/>
</dbReference>
<dbReference type="PANTHER" id="PTHR12599:SF0">
    <property type="entry name" value="PTERIN-4-ALPHA-CARBINOLAMINE DEHYDRATASE"/>
    <property type="match status" value="1"/>
</dbReference>
<dbReference type="Pfam" id="PF01329">
    <property type="entry name" value="Pterin_4a"/>
    <property type="match status" value="1"/>
</dbReference>
<dbReference type="SUPFAM" id="SSF55248">
    <property type="entry name" value="PCD-like"/>
    <property type="match status" value="1"/>
</dbReference>
<evidence type="ECO:0000255" key="1">
    <source>
        <dbReference type="HAMAP-Rule" id="MF_00434"/>
    </source>
</evidence>
<evidence type="ECO:0000305" key="2"/>
<feature type="chain" id="PRO_0000063072" description="Putative pterin-4-alpha-carbinolamine dehydratase">
    <location>
        <begin position="1"/>
        <end position="113"/>
    </location>
</feature>
<sequence length="113" mass="12574">MSTEFPMRIGAEVALPALQGWNAAAGRDAIEKRYRFDNFNAAFGFMARVAMFAEKMDHHPEWRNVYNRVDVTLTTHDAGGVTELDVRMAQFMDEAAGRLGATGLPARADQPRT</sequence>
<protein>
    <recommendedName>
        <fullName evidence="1">Putative pterin-4-alpha-carbinolamine dehydratase</fullName>
        <shortName evidence="1">PHS</shortName>
        <ecNumber evidence="1">4.2.1.96</ecNumber>
    </recommendedName>
    <alternativeName>
        <fullName evidence="1">4-alpha-hydroxy-tetrahydropterin dehydratase</fullName>
    </alternativeName>
    <alternativeName>
        <fullName evidence="1">Pterin carbinolamine dehydratase</fullName>
        <shortName evidence="1">PCD</shortName>
    </alternativeName>
</protein>
<keyword id="KW-0456">Lyase</keyword>
<name>PHS_BORBR</name>